<organism>
    <name type="scientific">Schizophyllum commune (strain H4-8 / FGSC 9210)</name>
    <name type="common">Split gill fungus</name>
    <dbReference type="NCBI Taxonomy" id="578458"/>
    <lineage>
        <taxon>Eukaryota</taxon>
        <taxon>Fungi</taxon>
        <taxon>Dikarya</taxon>
        <taxon>Basidiomycota</taxon>
        <taxon>Agaricomycotina</taxon>
        <taxon>Agaricomycetes</taxon>
        <taxon>Agaricomycetidae</taxon>
        <taxon>Agaricales</taxon>
        <taxon>Schizophyllaceae</taxon>
        <taxon>Schizophyllum</taxon>
    </lineage>
</organism>
<dbReference type="EC" id="3.1.1.117" evidence="3"/>
<dbReference type="EMBL" id="GL377318">
    <property type="protein sequence ID" value="EFI91386.1"/>
    <property type="molecule type" value="Genomic_DNA"/>
</dbReference>
<dbReference type="RefSeq" id="XP_003026289.1">
    <property type="nucleotide sequence ID" value="XM_003026243.1"/>
</dbReference>
<dbReference type="SMR" id="D8QLP9"/>
<dbReference type="STRING" id="578458.D8QLP9"/>
<dbReference type="ESTHER" id="schcm-gce">
    <property type="family name" value="Glucuronoyl_esterase"/>
</dbReference>
<dbReference type="GeneID" id="9589114"/>
<dbReference type="KEGG" id="scm:SCHCO_02754043"/>
<dbReference type="VEuPathDB" id="FungiDB:SCHCODRAFT_02754043"/>
<dbReference type="eggNOG" id="ENOG502QS8Y">
    <property type="taxonomic scope" value="Eukaryota"/>
</dbReference>
<dbReference type="HOGENOM" id="CLU_028869_1_1_1"/>
<dbReference type="InParanoid" id="D8QLP9"/>
<dbReference type="OMA" id="EQPWLGD"/>
<dbReference type="OrthoDB" id="3781271at2759"/>
<dbReference type="BRENDA" id="3.1.1.117">
    <property type="organism ID" value="5611"/>
</dbReference>
<dbReference type="SABIO-RK" id="D8QLP9"/>
<dbReference type="Proteomes" id="UP000007431">
    <property type="component" value="Unassembled WGS sequence"/>
</dbReference>
<dbReference type="GO" id="GO:0005576">
    <property type="term" value="C:extracellular region"/>
    <property type="evidence" value="ECO:0007669"/>
    <property type="project" value="UniProtKB-SubCell"/>
</dbReference>
<dbReference type="GO" id="GO:0052689">
    <property type="term" value="F:carboxylic ester hydrolase activity"/>
    <property type="evidence" value="ECO:0007669"/>
    <property type="project" value="UniProtKB-KW"/>
</dbReference>
<dbReference type="GO" id="GO:0046274">
    <property type="term" value="P:lignin catabolic process"/>
    <property type="evidence" value="ECO:0007669"/>
    <property type="project" value="UniProtKB-KW"/>
</dbReference>
<dbReference type="Gene3D" id="3.40.50.1820">
    <property type="entry name" value="alpha/beta hydrolase"/>
    <property type="match status" value="1"/>
</dbReference>
<dbReference type="InterPro" id="IPR029058">
    <property type="entry name" value="AB_hydrolase_fold"/>
</dbReference>
<dbReference type="InterPro" id="IPR054579">
    <property type="entry name" value="GCE-like_dom"/>
</dbReference>
<dbReference type="Pfam" id="PF22244">
    <property type="entry name" value="GCE_fung"/>
    <property type="match status" value="1"/>
</dbReference>
<dbReference type="SUPFAM" id="SSF53474">
    <property type="entry name" value="alpha/beta-Hydrolases"/>
    <property type="match status" value="1"/>
</dbReference>
<sequence length="393" mass="41773">MKLSAALLAIAAFANVASAQDCDTPATVSGYSNSALPDPFTFNDGSPVTTAEDWECRRSQILALIQGYESGAAPPEPESVTGTASGNSLSVQVSYGGKSITFNNSITYPSGTAPAEGWPVIIAYEFPSLPIPSNVATLSFQNSAMGKQDSTSSRGQGLFYDLYGSSSNASAMTAWAWGVSRIIDAIESTPDAKLNPAAVGVTGCSRNGKGALMAGALEPRVALTLPQESGSGGDACWRLSRYEEQQGSQVQTATEIVGENCWFSAGFDQYVNNLDSLPYDHHLLAALVAPRGLISYANTDYVWLSGMSSFGCMTAAHAVYEALGVPENHGFEQVGGHSHCQWPSQLDGSLNAFINKFLLGQDVSTDYFESNNQFNGVTWSESQWINWETPTLN</sequence>
<protein>
    <recommendedName>
        <fullName evidence="7">4-O-methyl-glucuronoyl methylesterase</fullName>
        <ecNumber evidence="3">3.1.1.117</ecNumber>
    </recommendedName>
    <alternativeName>
        <fullName evidence="5">Glucuronoyl esterase</fullName>
        <shortName evidence="6">GE</shortName>
    </alternativeName>
</protein>
<feature type="signal peptide" evidence="9">
    <location>
        <begin position="1"/>
        <end position="19"/>
    </location>
</feature>
<feature type="chain" id="PRO_5003121041" description="4-O-methyl-glucuronoyl methylesterase">
    <location>
        <begin position="20"/>
        <end position="393"/>
    </location>
</feature>
<feature type="short sequence motif" description="GXSYXG catalytic site motif" evidence="1">
    <location>
        <begin position="203"/>
        <end position="208"/>
    </location>
</feature>
<feature type="active site" description="Nucleophile" evidence="1">
    <location>
        <position position="205"/>
    </location>
</feature>
<feature type="active site" description="Proton donor/acceptor" evidence="1">
    <location>
        <position position="339"/>
    </location>
</feature>
<feature type="binding site" evidence="1">
    <location>
        <position position="209"/>
    </location>
    <ligand>
        <name>substrate</name>
    </ligand>
</feature>
<feature type="binding site" evidence="1">
    <location>
        <position position="251"/>
    </location>
    <ligand>
        <name>substrate</name>
    </ligand>
</feature>
<feature type="binding site" evidence="1">
    <location>
        <position position="259"/>
    </location>
    <ligand>
        <name>substrate</name>
    </ligand>
</feature>
<feature type="binding site" evidence="1">
    <location>
        <position position="303"/>
    </location>
    <ligand>
        <name>substrate</name>
    </ligand>
</feature>
<feature type="modified residue" description="Pyrrolidone carboxylic acid" evidence="9">
    <location>
        <position position="20"/>
    </location>
</feature>
<feature type="glycosylation site" description="N-linked (GlcNAc...) asparagine" evidence="2">
    <location>
        <position position="103"/>
    </location>
</feature>
<feature type="glycosylation site" description="N-linked (GlcNAc...) asparagine" evidence="2">
    <location>
        <position position="168"/>
    </location>
</feature>
<feature type="disulfide bond" evidence="1">
    <location>
        <begin position="22"/>
        <end position="56"/>
    </location>
</feature>
<feature type="disulfide bond" evidence="1">
    <location>
        <begin position="204"/>
        <end position="340"/>
    </location>
</feature>
<feature type="disulfide bond" evidence="1">
    <location>
        <begin position="236"/>
        <end position="312"/>
    </location>
</feature>
<name>GCE_SCHCM</name>
<reference key="1">
    <citation type="journal article" date="2010" name="Nat. Biotechnol.">
        <title>Genome sequence of the model mushroom Schizophyllum commune.</title>
        <authorList>
            <person name="Ohm R.A."/>
            <person name="de Jong J.F."/>
            <person name="Lugones L.G."/>
            <person name="Aerts A."/>
            <person name="Kothe E."/>
            <person name="Stajich J.E."/>
            <person name="de Vries R.P."/>
            <person name="Record E."/>
            <person name="Levasseur A."/>
            <person name="Baker S.E."/>
            <person name="Bartholomew K.A."/>
            <person name="Coutinho P.M."/>
            <person name="Erdmann S."/>
            <person name="Fowler T.J."/>
            <person name="Gathman A.C."/>
            <person name="Lombard V."/>
            <person name="Henrissat B."/>
            <person name="Knabe N."/>
            <person name="Kuees U."/>
            <person name="Lilly W.W."/>
            <person name="Lindquist E."/>
            <person name="Lucas S."/>
            <person name="Magnuson J.K."/>
            <person name="Piumi F."/>
            <person name="Raudaskoski M."/>
            <person name="Salamov A."/>
            <person name="Schmutz J."/>
            <person name="Schwarze F.W.M.R."/>
            <person name="vanKuyk P.A."/>
            <person name="Horton J.S."/>
            <person name="Grigoriev I.V."/>
            <person name="Woesten H.A.B."/>
        </authorList>
    </citation>
    <scope>NUCLEOTIDE SEQUENCE [LARGE SCALE GENOMIC DNA]</scope>
    <source>
        <strain>H4-8 / FGSC 9210</strain>
    </source>
</reference>
<reference key="2">
    <citation type="journal article" date="2007" name="FEBS Lett.">
        <title>Identification of genes encoding microbial glucuronoyl esterases.</title>
        <authorList>
            <person name="Li X.L."/>
            <person name="Spanikova S."/>
            <person name="de Vries R.P."/>
            <person name="Biely P."/>
        </authorList>
    </citation>
    <scope>PROTEIN SEQUENCE OF 21-40 AND 214-228</scope>
    <scope>PROBABLE PYROGLUTAMATE FORMATION AT GLN-20</scope>
    <source>
        <strain>ATCC 38548</strain>
    </source>
</reference>
<reference key="3">
    <citation type="journal article" date="2006" name="FEBS Lett.">
        <title>Glucuronoyl esterase--novel carbohydrate esterase produced by Schizophyllum commune.</title>
        <authorList>
            <person name="Spanikova S."/>
            <person name="Biely P."/>
        </authorList>
    </citation>
    <scope>FUNCTION</scope>
    <scope>CATALYTIC ACTIVITY</scope>
    <scope>BIOPHYSICOCHEMICAL PROPERTIES</scope>
    <scope>SUBCELLULAR LOCATION</scope>
    <source>
        <strain>ATCC 38548</strain>
    </source>
</reference>
<reference key="4">
    <citation type="journal article" date="2012" name="Biotechnol. Res. Int.">
        <title>Functional cloning and expression of the Schizophyllum commune glucuronoyl esterase gene and characterization of the recombinant enzyme.</title>
        <authorList>
            <person name="Wong D.W."/>
            <person name="Chan V.J."/>
            <person name="McCormack A.A."/>
            <person name="Hirsch J."/>
            <person name="Biely P."/>
        </authorList>
    </citation>
    <scope>BIOPHYSICOCHEMICAL PROPERTIES</scope>
</reference>
<evidence type="ECO:0000250" key="1">
    <source>
        <dbReference type="UniProtKB" id="G2QJR6"/>
    </source>
</evidence>
<evidence type="ECO:0000255" key="2">
    <source>
        <dbReference type="PROSITE-ProRule" id="PRU00498"/>
    </source>
</evidence>
<evidence type="ECO:0000269" key="3">
    <source>
    </source>
</evidence>
<evidence type="ECO:0000269" key="4">
    <source>
    </source>
</evidence>
<evidence type="ECO:0000303" key="5">
    <source>
    </source>
</evidence>
<evidence type="ECO:0000303" key="6">
    <source>
    </source>
</evidence>
<evidence type="ECO:0000305" key="7"/>
<evidence type="ECO:0000305" key="8">
    <source>
    </source>
</evidence>
<evidence type="ECO:0000305" key="9">
    <source>
    </source>
</evidence>
<comment type="function">
    <text evidence="3">Glucuronoyl esterase which may play a significant role in biomass degradation, as it is considered to disconnect hemicellulose from lignin through the hydrolysis of the ester bond between 4-O-methyl-D-glucuronic acid residues of glucuronoxylans and aromatic alcohols of lignin.</text>
</comment>
<comment type="catalytic activity">
    <reaction evidence="3">
        <text>a 4-O-methyl-alpha-D-glucuronosyl ester derivative + H2O = 4-O-methyl-alpha-D-glucuronate derivative + an alcohol + H(+)</text>
        <dbReference type="Rhea" id="RHEA:67452"/>
        <dbReference type="ChEBI" id="CHEBI:15377"/>
        <dbReference type="ChEBI" id="CHEBI:15378"/>
        <dbReference type="ChEBI" id="CHEBI:30879"/>
        <dbReference type="ChEBI" id="CHEBI:171667"/>
        <dbReference type="ChEBI" id="CHEBI:171668"/>
        <dbReference type="EC" id="3.1.1.117"/>
    </reaction>
    <physiologicalReaction direction="left-to-right" evidence="8">
        <dbReference type="Rhea" id="RHEA:67453"/>
    </physiologicalReaction>
</comment>
<comment type="biophysicochemical properties">
    <kinetics>
        <KM evidence="3">0.31 mM for 4-nitrophenyl 2-O-(methyl-4-O-methyl-alpha-D-glucopyranosyluronate)-beta-D-xylopyranoside (purified enzyme)</KM>
        <KM evidence="4">0.25 mM for 4-nitrophenyl 2-O-(methyl-4-O-methyl-alpha-D-glucopyranosyluronate)-beta-D-xylopyranoside (recombinant enzyme)</KM>
        <Vmax evidence="3">4.4 umol/min/mg enzyme toward 4-nitrophenyl 2-O-(methyl-4-O-methyl-alpha-D-glucopyranosyluronate)-beta-D-xylopyranoside (purified enzyme)</Vmax>
        <Vmax evidence="4">16.3 umol/min/mg enzyme toward 4-nitrophenyl 2-O-(methyl-4-O-methyl-alpha-D-glucopyranosyluronate)-beta-D-xylopyranoside (recombinant enzyme)</Vmax>
    </kinetics>
    <phDependence>
        <text evidence="3">Optimum pH is 7.</text>
    </phDependence>
    <temperatureDependence>
        <text evidence="3">Optimum temperature is 50 degrees Celsius.</text>
    </temperatureDependence>
</comment>
<comment type="subcellular location">
    <subcellularLocation>
        <location evidence="3">Secreted</location>
    </subcellularLocation>
</comment>
<comment type="similarity">
    <text evidence="7">Belongs to the carbohydrate esterase 15 (CE15) family.</text>
</comment>
<proteinExistence type="evidence at protein level"/>
<accession>D8QLP9</accession>
<gene>
    <name type="ORF">SCHCODRAFT_238770</name>
</gene>
<keyword id="KW-0903">Direct protein sequencing</keyword>
<keyword id="KW-1015">Disulfide bond</keyword>
<keyword id="KW-0325">Glycoprotein</keyword>
<keyword id="KW-0378">Hydrolase</keyword>
<keyword id="KW-0439">Lignin degradation</keyword>
<keyword id="KW-0873">Pyrrolidone carboxylic acid</keyword>
<keyword id="KW-1185">Reference proteome</keyword>
<keyword id="KW-0964">Secreted</keyword>
<keyword id="KW-0719">Serine esterase</keyword>
<keyword id="KW-0732">Signal</keyword>